<accession>Q328K2</accession>
<sequence length="154" mass="17224">MKLRDSLAVNKSIRLQAEAETWQDAVKIGVDLLVAADVVEPRYYQAILDGVEQFGPYFVIAPGLTMPHGRPEEGVKKTGFSLVTLKKPLEFNHDDNDPVDILITMAAVDANTHQEVGIMQIVNLFEDEENFDRLRACRTEQEVLDLIDRTNAAA</sequence>
<protein>
    <recommendedName>
        <fullName evidence="1">Ascorbate-specific PTS system EIIA component</fullName>
    </recommendedName>
    <alternativeName>
        <fullName evidence="1">Ascorbate-specific phosphotransferase enzyme IIA component</fullName>
    </alternativeName>
</protein>
<dbReference type="EMBL" id="CP000034">
    <property type="protein sequence ID" value="ABB64253.1"/>
    <property type="molecule type" value="Genomic_DNA"/>
</dbReference>
<dbReference type="RefSeq" id="WP_000776544.1">
    <property type="nucleotide sequence ID" value="NC_007606.1"/>
</dbReference>
<dbReference type="RefSeq" id="YP_405744.1">
    <property type="nucleotide sequence ID" value="NC_007606.1"/>
</dbReference>
<dbReference type="SMR" id="Q328K2"/>
<dbReference type="STRING" id="300267.SDY_4364"/>
<dbReference type="EnsemblBacteria" id="ABB64253">
    <property type="protein sequence ID" value="ABB64253"/>
    <property type="gene ID" value="SDY_4364"/>
</dbReference>
<dbReference type="KEGG" id="sdy:SDY_4364"/>
<dbReference type="PATRIC" id="fig|300267.13.peg.5152"/>
<dbReference type="HOGENOM" id="CLU_072531_2_0_6"/>
<dbReference type="Proteomes" id="UP000002716">
    <property type="component" value="Chromosome"/>
</dbReference>
<dbReference type="GO" id="GO:0005737">
    <property type="term" value="C:cytoplasm"/>
    <property type="evidence" value="ECO:0007669"/>
    <property type="project" value="UniProtKB-SubCell"/>
</dbReference>
<dbReference type="GO" id="GO:0016301">
    <property type="term" value="F:kinase activity"/>
    <property type="evidence" value="ECO:0007669"/>
    <property type="project" value="UniProtKB-KW"/>
</dbReference>
<dbReference type="GO" id="GO:0009401">
    <property type="term" value="P:phosphoenolpyruvate-dependent sugar phosphotransferase system"/>
    <property type="evidence" value="ECO:0007669"/>
    <property type="project" value="UniProtKB-KW"/>
</dbReference>
<dbReference type="CDD" id="cd00211">
    <property type="entry name" value="PTS_IIA_fru"/>
    <property type="match status" value="1"/>
</dbReference>
<dbReference type="FunFam" id="3.40.930.10:FF:000005">
    <property type="entry name" value="Ascorbate-specific phosphotransferase enzyme IIA component"/>
    <property type="match status" value="1"/>
</dbReference>
<dbReference type="Gene3D" id="3.40.930.10">
    <property type="entry name" value="Mannitol-specific EII, Chain A"/>
    <property type="match status" value="1"/>
</dbReference>
<dbReference type="InterPro" id="IPR051351">
    <property type="entry name" value="Ascorbate-PTS_EIIA_comp"/>
</dbReference>
<dbReference type="InterPro" id="IPR016152">
    <property type="entry name" value="PTrfase/Anion_transptr"/>
</dbReference>
<dbReference type="InterPro" id="IPR002178">
    <property type="entry name" value="PTS_EIIA_type-2_dom"/>
</dbReference>
<dbReference type="NCBIfam" id="NF007694">
    <property type="entry name" value="PRK10372.1"/>
    <property type="match status" value="1"/>
</dbReference>
<dbReference type="PANTHER" id="PTHR36203">
    <property type="entry name" value="ASCORBATE-SPECIFIC PTS SYSTEM EIIA COMPONENT"/>
    <property type="match status" value="1"/>
</dbReference>
<dbReference type="PANTHER" id="PTHR36203:SF1">
    <property type="entry name" value="ASCORBATE-SPECIFIC PTS SYSTEM EIIA COMPONENT"/>
    <property type="match status" value="1"/>
</dbReference>
<dbReference type="Pfam" id="PF00359">
    <property type="entry name" value="PTS_EIIA_2"/>
    <property type="match status" value="1"/>
</dbReference>
<dbReference type="SUPFAM" id="SSF55804">
    <property type="entry name" value="Phoshotransferase/anion transport protein"/>
    <property type="match status" value="1"/>
</dbReference>
<dbReference type="PROSITE" id="PS51094">
    <property type="entry name" value="PTS_EIIA_TYPE_2"/>
    <property type="match status" value="1"/>
</dbReference>
<gene>
    <name type="primary">ulaC</name>
    <name type="ordered locus">SDY_4364</name>
</gene>
<proteinExistence type="inferred from homology"/>
<keyword id="KW-0963">Cytoplasm</keyword>
<keyword id="KW-0418">Kinase</keyword>
<keyword id="KW-0597">Phosphoprotein</keyword>
<keyword id="KW-0598">Phosphotransferase system</keyword>
<keyword id="KW-1185">Reference proteome</keyword>
<keyword id="KW-0808">Transferase</keyword>
<keyword id="KW-0813">Transport</keyword>
<comment type="function">
    <text evidence="1">The phosphoenolpyruvate-dependent sugar phosphotransferase system (sugar PTS), a major carbohydrate active transport system, catalyzes the phosphorylation of incoming sugar substrates concomitantly with their translocation across the cell membrane. The enzyme II UlaABC PTS system is involved in ascorbate transport.</text>
</comment>
<comment type="subcellular location">
    <subcellularLocation>
        <location evidence="3">Cytoplasm</location>
    </subcellularLocation>
</comment>
<comment type="induction">
    <text evidence="1">Induced by L-ascorbate. Repressed by UlaR.</text>
</comment>
<comment type="domain">
    <text evidence="2">The PTS EIIA type-2 domain is phosphorylated by phospho-HPr on a histidyl residue. Then, it transfers the phosphoryl group to the PTS EIIB type-2 domain.</text>
</comment>
<organism>
    <name type="scientific">Shigella dysenteriae serotype 1 (strain Sd197)</name>
    <dbReference type="NCBI Taxonomy" id="300267"/>
    <lineage>
        <taxon>Bacteria</taxon>
        <taxon>Pseudomonadati</taxon>
        <taxon>Pseudomonadota</taxon>
        <taxon>Gammaproteobacteria</taxon>
        <taxon>Enterobacterales</taxon>
        <taxon>Enterobacteriaceae</taxon>
        <taxon>Shigella</taxon>
    </lineage>
</organism>
<evidence type="ECO:0000250" key="1">
    <source>
        <dbReference type="UniProtKB" id="P69820"/>
    </source>
</evidence>
<evidence type="ECO:0000255" key="2">
    <source>
        <dbReference type="PROSITE-ProRule" id="PRU00417"/>
    </source>
</evidence>
<evidence type="ECO:0000305" key="3"/>
<name>ULAC_SHIDS</name>
<feature type="chain" id="PRO_0000230319" description="Ascorbate-specific PTS system EIIA component">
    <location>
        <begin position="1"/>
        <end position="154"/>
    </location>
</feature>
<feature type="domain" description="PTS EIIA type-2" evidence="2">
    <location>
        <begin position="6"/>
        <end position="150"/>
    </location>
</feature>
<feature type="active site" description="Tele-phosphohistidine intermediate" evidence="2">
    <location>
        <position position="68"/>
    </location>
</feature>
<feature type="modified residue" description="Phosphohistidine" evidence="1">
    <location>
        <position position="68"/>
    </location>
</feature>
<reference key="1">
    <citation type="journal article" date="2005" name="Nucleic Acids Res.">
        <title>Genome dynamics and diversity of Shigella species, the etiologic agents of bacillary dysentery.</title>
        <authorList>
            <person name="Yang F."/>
            <person name="Yang J."/>
            <person name="Zhang X."/>
            <person name="Chen L."/>
            <person name="Jiang Y."/>
            <person name="Yan Y."/>
            <person name="Tang X."/>
            <person name="Wang J."/>
            <person name="Xiong Z."/>
            <person name="Dong J."/>
            <person name="Xue Y."/>
            <person name="Zhu Y."/>
            <person name="Xu X."/>
            <person name="Sun L."/>
            <person name="Chen S."/>
            <person name="Nie H."/>
            <person name="Peng J."/>
            <person name="Xu J."/>
            <person name="Wang Y."/>
            <person name="Yuan Z."/>
            <person name="Wen Y."/>
            <person name="Yao Z."/>
            <person name="Shen Y."/>
            <person name="Qiang B."/>
            <person name="Hou Y."/>
            <person name="Yu J."/>
            <person name="Jin Q."/>
        </authorList>
    </citation>
    <scope>NUCLEOTIDE SEQUENCE [LARGE SCALE GENOMIC DNA]</scope>
    <source>
        <strain>Sd197</strain>
    </source>
</reference>